<evidence type="ECO:0000255" key="1">
    <source>
        <dbReference type="HAMAP-Rule" id="MF_00488"/>
    </source>
</evidence>
<dbReference type="EC" id="1.1.1.27" evidence="1"/>
<dbReference type="EMBL" id="CP001129">
    <property type="protein sequence ID" value="ACG62376.1"/>
    <property type="molecule type" value="Genomic_DNA"/>
</dbReference>
<dbReference type="RefSeq" id="WP_012515644.1">
    <property type="nucleotide sequence ID" value="NC_011134.1"/>
</dbReference>
<dbReference type="SMR" id="B4U309"/>
<dbReference type="KEGG" id="sez:Sez_1022"/>
<dbReference type="HOGENOM" id="CLU_045401_1_1_9"/>
<dbReference type="UniPathway" id="UPA00554">
    <property type="reaction ID" value="UER00611"/>
</dbReference>
<dbReference type="Proteomes" id="UP000001873">
    <property type="component" value="Chromosome"/>
</dbReference>
<dbReference type="GO" id="GO:0005737">
    <property type="term" value="C:cytoplasm"/>
    <property type="evidence" value="ECO:0007669"/>
    <property type="project" value="UniProtKB-SubCell"/>
</dbReference>
<dbReference type="GO" id="GO:0004459">
    <property type="term" value="F:L-lactate dehydrogenase activity"/>
    <property type="evidence" value="ECO:0007669"/>
    <property type="project" value="UniProtKB-UniRule"/>
</dbReference>
<dbReference type="GO" id="GO:0006096">
    <property type="term" value="P:glycolytic process"/>
    <property type="evidence" value="ECO:0007669"/>
    <property type="project" value="UniProtKB-UniRule"/>
</dbReference>
<dbReference type="GO" id="GO:0006089">
    <property type="term" value="P:lactate metabolic process"/>
    <property type="evidence" value="ECO:0007669"/>
    <property type="project" value="TreeGrafter"/>
</dbReference>
<dbReference type="CDD" id="cd05291">
    <property type="entry name" value="HicDH_like"/>
    <property type="match status" value="1"/>
</dbReference>
<dbReference type="FunFam" id="3.40.50.720:FF:000018">
    <property type="entry name" value="Malate dehydrogenase"/>
    <property type="match status" value="1"/>
</dbReference>
<dbReference type="Gene3D" id="3.90.110.10">
    <property type="entry name" value="Lactate dehydrogenase/glycoside hydrolase, family 4, C-terminal"/>
    <property type="match status" value="1"/>
</dbReference>
<dbReference type="Gene3D" id="3.40.50.720">
    <property type="entry name" value="NAD(P)-binding Rossmann-like Domain"/>
    <property type="match status" value="1"/>
</dbReference>
<dbReference type="HAMAP" id="MF_00488">
    <property type="entry name" value="Lactate_dehydrog"/>
    <property type="match status" value="1"/>
</dbReference>
<dbReference type="InterPro" id="IPR001557">
    <property type="entry name" value="L-lactate/malate_DH"/>
</dbReference>
<dbReference type="InterPro" id="IPR011304">
    <property type="entry name" value="L-lactate_DH"/>
</dbReference>
<dbReference type="InterPro" id="IPR018177">
    <property type="entry name" value="L-lactate_DH_AS"/>
</dbReference>
<dbReference type="InterPro" id="IPR022383">
    <property type="entry name" value="Lactate/malate_DH_C"/>
</dbReference>
<dbReference type="InterPro" id="IPR001236">
    <property type="entry name" value="Lactate/malate_DH_N"/>
</dbReference>
<dbReference type="InterPro" id="IPR015955">
    <property type="entry name" value="Lactate_DH/Glyco_Ohase_4_C"/>
</dbReference>
<dbReference type="InterPro" id="IPR036291">
    <property type="entry name" value="NAD(P)-bd_dom_sf"/>
</dbReference>
<dbReference type="NCBIfam" id="TIGR01771">
    <property type="entry name" value="L-LDH-NAD"/>
    <property type="match status" value="1"/>
</dbReference>
<dbReference type="NCBIfam" id="NF000824">
    <property type="entry name" value="PRK00066.1"/>
    <property type="match status" value="1"/>
</dbReference>
<dbReference type="PANTHER" id="PTHR43128">
    <property type="entry name" value="L-2-HYDROXYCARBOXYLATE DEHYDROGENASE (NAD(P)(+))"/>
    <property type="match status" value="1"/>
</dbReference>
<dbReference type="PANTHER" id="PTHR43128:SF16">
    <property type="entry name" value="L-LACTATE DEHYDROGENASE"/>
    <property type="match status" value="1"/>
</dbReference>
<dbReference type="Pfam" id="PF02866">
    <property type="entry name" value="Ldh_1_C"/>
    <property type="match status" value="1"/>
</dbReference>
<dbReference type="Pfam" id="PF00056">
    <property type="entry name" value="Ldh_1_N"/>
    <property type="match status" value="1"/>
</dbReference>
<dbReference type="PIRSF" id="PIRSF000102">
    <property type="entry name" value="Lac_mal_DH"/>
    <property type="match status" value="1"/>
</dbReference>
<dbReference type="PRINTS" id="PR00086">
    <property type="entry name" value="LLDHDRGNASE"/>
</dbReference>
<dbReference type="SUPFAM" id="SSF56327">
    <property type="entry name" value="LDH C-terminal domain-like"/>
    <property type="match status" value="1"/>
</dbReference>
<dbReference type="SUPFAM" id="SSF51735">
    <property type="entry name" value="NAD(P)-binding Rossmann-fold domains"/>
    <property type="match status" value="1"/>
</dbReference>
<dbReference type="PROSITE" id="PS00064">
    <property type="entry name" value="L_LDH"/>
    <property type="match status" value="1"/>
</dbReference>
<gene>
    <name evidence="1" type="primary">ldh</name>
    <name type="ordered locus">Sez_1022</name>
</gene>
<keyword id="KW-0021">Allosteric enzyme</keyword>
<keyword id="KW-0963">Cytoplasm</keyword>
<keyword id="KW-0520">NAD</keyword>
<keyword id="KW-0560">Oxidoreductase</keyword>
<keyword id="KW-0597">Phosphoprotein</keyword>
<protein>
    <recommendedName>
        <fullName evidence="1">L-lactate dehydrogenase</fullName>
        <shortName evidence="1">L-LDH</shortName>
        <ecNumber evidence="1">1.1.1.27</ecNumber>
    </recommendedName>
</protein>
<feature type="chain" id="PRO_1000126158" description="L-lactate dehydrogenase">
    <location>
        <begin position="1"/>
        <end position="327"/>
    </location>
</feature>
<feature type="active site" description="Proton acceptor" evidence="1">
    <location>
        <position position="179"/>
    </location>
</feature>
<feature type="binding site" evidence="1">
    <location>
        <position position="18"/>
    </location>
    <ligand>
        <name>NAD(+)</name>
        <dbReference type="ChEBI" id="CHEBI:57540"/>
    </ligand>
</feature>
<feature type="binding site" evidence="1">
    <location>
        <position position="39"/>
    </location>
    <ligand>
        <name>NAD(+)</name>
        <dbReference type="ChEBI" id="CHEBI:57540"/>
    </ligand>
</feature>
<feature type="binding site" evidence="1">
    <location>
        <position position="44"/>
    </location>
    <ligand>
        <name>NAD(+)</name>
        <dbReference type="ChEBI" id="CHEBI:57540"/>
    </ligand>
</feature>
<feature type="binding site" evidence="1">
    <location>
        <position position="69"/>
    </location>
    <ligand>
        <name>NAD(+)</name>
        <dbReference type="ChEBI" id="CHEBI:57540"/>
    </ligand>
</feature>
<feature type="binding site" evidence="1">
    <location>
        <begin position="83"/>
        <end position="84"/>
    </location>
    <ligand>
        <name>NAD(+)</name>
        <dbReference type="ChEBI" id="CHEBI:57540"/>
    </ligand>
</feature>
<feature type="binding site" evidence="1">
    <location>
        <position position="86"/>
    </location>
    <ligand>
        <name>substrate</name>
    </ligand>
</feature>
<feature type="binding site" evidence="1">
    <location>
        <position position="92"/>
    </location>
    <ligand>
        <name>substrate</name>
    </ligand>
</feature>
<feature type="binding site" evidence="1">
    <location>
        <begin position="122"/>
        <end position="124"/>
    </location>
    <ligand>
        <name>NAD(+)</name>
        <dbReference type="ChEBI" id="CHEBI:57540"/>
    </ligand>
</feature>
<feature type="binding site" evidence="1">
    <location>
        <begin position="124"/>
        <end position="127"/>
    </location>
    <ligand>
        <name>substrate</name>
    </ligand>
</feature>
<feature type="binding site" evidence="1">
    <location>
        <position position="147"/>
    </location>
    <ligand>
        <name>NAD(+)</name>
        <dbReference type="ChEBI" id="CHEBI:57540"/>
    </ligand>
</feature>
<feature type="binding site" evidence="1">
    <location>
        <begin position="152"/>
        <end position="155"/>
    </location>
    <ligand>
        <name>substrate</name>
    </ligand>
</feature>
<feature type="binding site" evidence="1">
    <location>
        <position position="157"/>
    </location>
    <ligand>
        <name>beta-D-fructose 1,6-bisphosphate</name>
        <dbReference type="ChEBI" id="CHEBI:32966"/>
        <note>allosteric activator</note>
    </ligand>
</feature>
<feature type="binding site" evidence="1">
    <location>
        <position position="172"/>
    </location>
    <ligand>
        <name>beta-D-fructose 1,6-bisphosphate</name>
        <dbReference type="ChEBI" id="CHEBI:32966"/>
        <note>allosteric activator</note>
    </ligand>
</feature>
<feature type="binding site" evidence="1">
    <location>
        <position position="233"/>
    </location>
    <ligand>
        <name>substrate</name>
    </ligand>
</feature>
<feature type="modified residue" description="Phosphotyrosine" evidence="1">
    <location>
        <position position="224"/>
    </location>
</feature>
<name>LDH_STREM</name>
<sequence>MTATKQHKKVILVGDGAVGSSYAFALVTQNIAQELGIIDIFKEKTQGDAEDLSHALAFTSPKKIYAADYADCHDADLVVLTAGAPQKPGETRLDLVEKNLRINKEVVTQIVASGFKGIFLVAANPVDILTYSTWKFSGFPKERVIGSGTSLDSARFRQALAAKIGVDARSVHAYIMGEHGDSEFAVWSHANVAGVGLYDWLQANRDVDEQGLVDLFISVRDAAYSIINKKGATFYGIAVALARITKAILDDENAVLPLSVFQEGQYEGVEDCYIGQPAIVGAYGIVRPVNIPLNDAELQKMQASANQLKAIIDEAFSKEEFASAAKN</sequence>
<reference key="1">
    <citation type="journal article" date="2008" name="PLoS ONE">
        <title>Genome sequence of a lancefield group C Streptococcus zooepidemicus strain causing epidemic nephritis: new information about an old disease.</title>
        <authorList>
            <person name="Beres S.B."/>
            <person name="Sesso R."/>
            <person name="Pinto S.W.L."/>
            <person name="Hoe N.P."/>
            <person name="Porcella S.F."/>
            <person name="Deleo F.R."/>
            <person name="Musser J.M."/>
        </authorList>
    </citation>
    <scope>NUCLEOTIDE SEQUENCE [LARGE SCALE GENOMIC DNA]</scope>
    <source>
        <strain>MGCS10565</strain>
    </source>
</reference>
<proteinExistence type="inferred from homology"/>
<accession>B4U309</accession>
<comment type="function">
    <text evidence="1">Catalyzes the conversion of lactate to pyruvate.</text>
</comment>
<comment type="catalytic activity">
    <reaction evidence="1">
        <text>(S)-lactate + NAD(+) = pyruvate + NADH + H(+)</text>
        <dbReference type="Rhea" id="RHEA:23444"/>
        <dbReference type="ChEBI" id="CHEBI:15361"/>
        <dbReference type="ChEBI" id="CHEBI:15378"/>
        <dbReference type="ChEBI" id="CHEBI:16651"/>
        <dbReference type="ChEBI" id="CHEBI:57540"/>
        <dbReference type="ChEBI" id="CHEBI:57945"/>
        <dbReference type="EC" id="1.1.1.27"/>
    </reaction>
</comment>
<comment type="activity regulation">
    <text evidence="1">Allosterically activated by fructose 1,6-bisphosphate (FBP).</text>
</comment>
<comment type="pathway">
    <text evidence="1">Fermentation; pyruvate fermentation to lactate; (S)-lactate from pyruvate: step 1/1.</text>
</comment>
<comment type="subunit">
    <text evidence="1">Homotetramer.</text>
</comment>
<comment type="subcellular location">
    <subcellularLocation>
        <location evidence="1">Cytoplasm</location>
    </subcellularLocation>
</comment>
<comment type="similarity">
    <text evidence="1">Belongs to the LDH/MDH superfamily. LDH family.</text>
</comment>
<organism>
    <name type="scientific">Streptococcus equi subsp. zooepidemicus (strain MGCS10565)</name>
    <dbReference type="NCBI Taxonomy" id="552526"/>
    <lineage>
        <taxon>Bacteria</taxon>
        <taxon>Bacillati</taxon>
        <taxon>Bacillota</taxon>
        <taxon>Bacilli</taxon>
        <taxon>Lactobacillales</taxon>
        <taxon>Streptococcaceae</taxon>
        <taxon>Streptococcus</taxon>
    </lineage>
</organism>